<accession>P80842</accession>
<sequence>KDLXHRDDKT</sequence>
<comment type="subcellular location">
    <subcellularLocation>
        <location evidence="1">Secreted</location>
        <location evidence="1">Cell wall</location>
    </subcellularLocation>
</comment>
<proteinExistence type="evidence at protein level"/>
<feature type="chain" id="PRO_0000079693" description="36 kDa cell wall protein">
    <location>
        <begin position="1"/>
        <end position="10" status="greater than"/>
    </location>
</feature>
<feature type="non-terminal residue" evidence="2">
    <location>
        <position position="10"/>
    </location>
</feature>
<organism>
    <name type="scientific">Arabidopsis thaliana</name>
    <name type="common">Mouse-ear cress</name>
    <dbReference type="NCBI Taxonomy" id="3702"/>
    <lineage>
        <taxon>Eukaryota</taxon>
        <taxon>Viridiplantae</taxon>
        <taxon>Streptophyta</taxon>
        <taxon>Embryophyta</taxon>
        <taxon>Tracheophyta</taxon>
        <taxon>Spermatophyta</taxon>
        <taxon>Magnoliopsida</taxon>
        <taxon>eudicotyledons</taxon>
        <taxon>Gunneridae</taxon>
        <taxon>Pentapetalae</taxon>
        <taxon>rosids</taxon>
        <taxon>malvids</taxon>
        <taxon>Brassicales</taxon>
        <taxon>Brassicaceae</taxon>
        <taxon>Camelineae</taxon>
        <taxon>Arabidopsis</taxon>
    </lineage>
</organism>
<name>CWP21_ARATH</name>
<evidence type="ECO:0000269" key="1">
    <source>
    </source>
</evidence>
<evidence type="ECO:0000303" key="2">
    <source>
    </source>
</evidence>
<evidence type="ECO:0000305" key="3"/>
<protein>
    <recommendedName>
        <fullName>36 kDa cell wall protein</fullName>
    </recommendedName>
</protein>
<reference evidence="3" key="1">
    <citation type="journal article" date="1997" name="J. Biol. Chem.">
        <title>Differential extraction and protein sequencing reveals major differences in patterns of primary cell wall proteins from plants.</title>
        <authorList>
            <person name="Robertson D."/>
            <person name="Mitchell G.P."/>
            <person name="Gilroy J.S."/>
            <person name="Gerrish C."/>
            <person name="Bolwell G.P."/>
            <person name="Slabas A.R."/>
        </authorList>
    </citation>
    <scope>PROTEIN SEQUENCE</scope>
    <scope>SUBCELLULAR LOCATION</scope>
    <source>
        <strain>cv. Landsberg erecta</strain>
    </source>
</reference>
<keyword id="KW-0134">Cell wall</keyword>
<keyword id="KW-0903">Direct protein sequencing</keyword>
<keyword id="KW-0964">Secreted</keyword>
<dbReference type="GO" id="GO:0005576">
    <property type="term" value="C:extracellular region"/>
    <property type="evidence" value="ECO:0007669"/>
    <property type="project" value="UniProtKB-KW"/>
</dbReference>